<accession>Q8M9Y7</accession>
<evidence type="ECO:0000255" key="1">
    <source>
        <dbReference type="HAMAP-Rule" id="MF_00270"/>
    </source>
</evidence>
<evidence type="ECO:0000305" key="2"/>
<gene>
    <name evidence="1" type="primary">rps18</name>
</gene>
<protein>
    <recommendedName>
        <fullName evidence="1">Small ribosomal subunit protein bS18c</fullName>
    </recommendedName>
    <alternativeName>
        <fullName evidence="2">30S ribosomal protein S18, chloroplastic</fullName>
    </alternativeName>
</protein>
<geneLocation type="chloroplast"/>
<name>RR18_CHAGL</name>
<keyword id="KW-0150">Chloroplast</keyword>
<keyword id="KW-0934">Plastid</keyword>
<keyword id="KW-0687">Ribonucleoprotein</keyword>
<keyword id="KW-0689">Ribosomal protein</keyword>
<keyword id="KW-0694">RNA-binding</keyword>
<keyword id="KW-0699">rRNA-binding</keyword>
<comment type="subunit">
    <text>Part of the 30S ribosomal subunit.</text>
</comment>
<comment type="subcellular location">
    <subcellularLocation>
        <location>Plastid</location>
        <location>Chloroplast</location>
    </subcellularLocation>
</comment>
<comment type="similarity">
    <text evidence="1">Belongs to the bacterial ribosomal protein bS18 family.</text>
</comment>
<organism>
    <name type="scientific">Chaetosphaeridium globosum</name>
    <name type="common">Charophycean green alga</name>
    <name type="synonym">Herposteiron globosum</name>
    <dbReference type="NCBI Taxonomy" id="96477"/>
    <lineage>
        <taxon>Eukaryota</taxon>
        <taxon>Viridiplantae</taxon>
        <taxon>Streptophyta</taxon>
        <taxon>Coleochaetophyceae</taxon>
        <taxon>Coleochaetales</taxon>
        <taxon>Chaetosphaeridiaceae</taxon>
        <taxon>Chaetosphaeridium</taxon>
    </lineage>
</organism>
<reference key="1">
    <citation type="journal article" date="2002" name="Proc. Natl. Acad. Sci. U.S.A.">
        <title>The chloroplast and mitochondrial genome sequences of the charophyte Chaetosphaeridium globosum: insights into the timing of the events that restructured organelle DNAs within the green algal lineage that led to land plants.</title>
        <authorList>
            <person name="Turmel M."/>
            <person name="Otis C."/>
            <person name="Lemieux C."/>
        </authorList>
    </citation>
    <scope>NUCLEOTIDE SEQUENCE [LARGE SCALE GENOMIC DNA]</scope>
    <source>
        <strain>M1311</strain>
    </source>
</reference>
<proteinExistence type="inferred from homology"/>
<feature type="chain" id="PRO_0000111279" description="Small ribosomal subunit protein bS18c">
    <location>
        <begin position="1"/>
        <end position="79"/>
    </location>
</feature>
<sequence length="79" mass="9291">MKDLVNRSKRMSRRRLAPIRAGESIDYKNVGLLRRFISEQGKILSRRVNRLTAKQQRNMTKAIKRARILALLPFLNNEN</sequence>
<dbReference type="EMBL" id="AF494278">
    <property type="protein sequence ID" value="AAM96573.1"/>
    <property type="molecule type" value="Genomic_DNA"/>
</dbReference>
<dbReference type="RefSeq" id="NP_683799.1">
    <property type="nucleotide sequence ID" value="NC_004115.1"/>
</dbReference>
<dbReference type="SMR" id="Q8M9Y7"/>
<dbReference type="GeneID" id="860729"/>
<dbReference type="GO" id="GO:0009507">
    <property type="term" value="C:chloroplast"/>
    <property type="evidence" value="ECO:0007669"/>
    <property type="project" value="UniProtKB-SubCell"/>
</dbReference>
<dbReference type="GO" id="GO:0005763">
    <property type="term" value="C:mitochondrial small ribosomal subunit"/>
    <property type="evidence" value="ECO:0007669"/>
    <property type="project" value="TreeGrafter"/>
</dbReference>
<dbReference type="GO" id="GO:0070181">
    <property type="term" value="F:small ribosomal subunit rRNA binding"/>
    <property type="evidence" value="ECO:0007669"/>
    <property type="project" value="TreeGrafter"/>
</dbReference>
<dbReference type="GO" id="GO:0003735">
    <property type="term" value="F:structural constituent of ribosome"/>
    <property type="evidence" value="ECO:0007669"/>
    <property type="project" value="InterPro"/>
</dbReference>
<dbReference type="GO" id="GO:0006412">
    <property type="term" value="P:translation"/>
    <property type="evidence" value="ECO:0007669"/>
    <property type="project" value="UniProtKB-UniRule"/>
</dbReference>
<dbReference type="FunFam" id="4.10.640.10:FF:000002">
    <property type="entry name" value="30S ribosomal protein S18, chloroplastic"/>
    <property type="match status" value="1"/>
</dbReference>
<dbReference type="Gene3D" id="4.10.640.10">
    <property type="entry name" value="Ribosomal protein S18"/>
    <property type="match status" value="1"/>
</dbReference>
<dbReference type="HAMAP" id="MF_00270">
    <property type="entry name" value="Ribosomal_bS18"/>
    <property type="match status" value="1"/>
</dbReference>
<dbReference type="InterPro" id="IPR001648">
    <property type="entry name" value="Ribosomal_bS18"/>
</dbReference>
<dbReference type="InterPro" id="IPR018275">
    <property type="entry name" value="Ribosomal_bS18_CS"/>
</dbReference>
<dbReference type="InterPro" id="IPR036870">
    <property type="entry name" value="Ribosomal_bS18_sf"/>
</dbReference>
<dbReference type="NCBIfam" id="TIGR00165">
    <property type="entry name" value="S18"/>
    <property type="match status" value="1"/>
</dbReference>
<dbReference type="PANTHER" id="PTHR13479">
    <property type="entry name" value="30S RIBOSOMAL PROTEIN S18"/>
    <property type="match status" value="1"/>
</dbReference>
<dbReference type="PANTHER" id="PTHR13479:SF40">
    <property type="entry name" value="SMALL RIBOSOMAL SUBUNIT PROTEIN BS18M"/>
    <property type="match status" value="1"/>
</dbReference>
<dbReference type="Pfam" id="PF01084">
    <property type="entry name" value="Ribosomal_S18"/>
    <property type="match status" value="1"/>
</dbReference>
<dbReference type="PRINTS" id="PR00974">
    <property type="entry name" value="RIBOSOMALS18"/>
</dbReference>
<dbReference type="SUPFAM" id="SSF46911">
    <property type="entry name" value="Ribosomal protein S18"/>
    <property type="match status" value="1"/>
</dbReference>
<dbReference type="PROSITE" id="PS00057">
    <property type="entry name" value="RIBOSOMAL_S18"/>
    <property type="match status" value="1"/>
</dbReference>